<protein>
    <recommendedName>
        <fullName>Somatolactin</fullName>
        <shortName>SL</shortName>
    </recommendedName>
</protein>
<evidence type="ECO:0000250" key="1"/>
<evidence type="ECO:0000255" key="2"/>
<evidence type="ECO:0000305" key="3"/>
<comment type="subcellular location">
    <subcellularLocation>
        <location>Secreted</location>
    </subcellularLocation>
</comment>
<comment type="similarity">
    <text evidence="3">Belongs to the somatotropin/prolactin family.</text>
</comment>
<name>SOML_HIPHI</name>
<organism>
    <name type="scientific">Hippoglossus hippoglossus</name>
    <name type="common">Atlantic halibut</name>
    <name type="synonym">Pleuronectes hippoglossus</name>
    <dbReference type="NCBI Taxonomy" id="8267"/>
    <lineage>
        <taxon>Eukaryota</taxon>
        <taxon>Metazoa</taxon>
        <taxon>Chordata</taxon>
        <taxon>Craniata</taxon>
        <taxon>Vertebrata</taxon>
        <taxon>Euteleostomi</taxon>
        <taxon>Actinopterygii</taxon>
        <taxon>Neopterygii</taxon>
        <taxon>Teleostei</taxon>
        <taxon>Neoteleostei</taxon>
        <taxon>Acanthomorphata</taxon>
        <taxon>Carangaria</taxon>
        <taxon>Pleuronectiformes</taxon>
        <taxon>Pleuronectoidei</taxon>
        <taxon>Pleuronectidae</taxon>
        <taxon>Hippoglossus</taxon>
    </lineage>
</organism>
<sequence>MNMMTVKQGVWAALLWPYLLAASIPLDCKDEQGSFSACPSISQEKLLDRVIQHAELIYRVSEESCSMFEEMFVPFPLRLQRNQAGYACITKALPIPSSKSEIQQISDTWLLHSVLLLVQSWIDPLVYLQTTLDRYDNASEMLLNKTKWVSDKLISLEQGVVVLIRKMLDEGMLTATYNEQGLFQYDVLPDMLESVMRDYTLLSCFKKDAHKMEIFLKLLKCRQTDKYNCP</sequence>
<accession>P45641</accession>
<keyword id="KW-1015">Disulfide bond</keyword>
<keyword id="KW-0325">Glycoprotein</keyword>
<keyword id="KW-0372">Hormone</keyword>
<keyword id="KW-0964">Secreted</keyword>
<keyword id="KW-0732">Signal</keyword>
<reference key="1">
    <citation type="journal article" date="1993" name="Mol. Mar. Biol. Biotechnol.">
        <title>Isolation and characterization of somatolactin genes from two cold water marine teleosts, lumpfish (Cyclopterus lumpus) and halibut (Hippoglossus hippoglossus).</title>
        <authorList>
            <person name="Iraqi F."/>
            <person name="Gong Z."/>
            <person name="Hew C.-L."/>
            <person name="Crim L.W."/>
        </authorList>
    </citation>
    <scope>NUCLEOTIDE SEQUENCE [MRNA]</scope>
</reference>
<proteinExistence type="evidence at transcript level"/>
<feature type="signal peptide" evidence="2">
    <location>
        <begin position="1"/>
        <end position="23"/>
    </location>
</feature>
<feature type="chain" id="PRO_0000033069" description="Somatolactin">
    <location>
        <begin position="24"/>
        <end position="230"/>
    </location>
</feature>
<feature type="glycosylation site" description="N-linked (GlcNAc...) asparagine" evidence="2">
    <location>
        <position position="137"/>
    </location>
</feature>
<feature type="glycosylation site" description="N-linked (GlcNAc...) asparagine" evidence="2">
    <location>
        <position position="144"/>
    </location>
</feature>
<feature type="disulfide bond" evidence="1">
    <location>
        <begin position="28"/>
        <end position="38"/>
    </location>
</feature>
<feature type="disulfide bond" evidence="1">
    <location>
        <begin position="88"/>
        <end position="204"/>
    </location>
</feature>
<feature type="disulfide bond" evidence="1">
    <location>
        <begin position="221"/>
        <end position="229"/>
    </location>
</feature>
<dbReference type="EMBL" id="L02117">
    <property type="protein sequence ID" value="AAC38003.1"/>
    <property type="molecule type" value="mRNA"/>
</dbReference>
<dbReference type="SMR" id="P45641"/>
<dbReference type="GO" id="GO:0005615">
    <property type="term" value="C:extracellular space"/>
    <property type="evidence" value="ECO:0007669"/>
    <property type="project" value="TreeGrafter"/>
</dbReference>
<dbReference type="GO" id="GO:0070186">
    <property type="term" value="F:growth hormone activity"/>
    <property type="evidence" value="ECO:0007669"/>
    <property type="project" value="TreeGrafter"/>
</dbReference>
<dbReference type="GO" id="GO:0005131">
    <property type="term" value="F:growth hormone receptor binding"/>
    <property type="evidence" value="ECO:0007669"/>
    <property type="project" value="TreeGrafter"/>
</dbReference>
<dbReference type="GO" id="GO:0048513">
    <property type="term" value="P:animal organ development"/>
    <property type="evidence" value="ECO:0007669"/>
    <property type="project" value="TreeGrafter"/>
</dbReference>
<dbReference type="GO" id="GO:0060396">
    <property type="term" value="P:growth hormone receptor signaling pathway"/>
    <property type="evidence" value="ECO:0007669"/>
    <property type="project" value="TreeGrafter"/>
</dbReference>
<dbReference type="GO" id="GO:0045927">
    <property type="term" value="P:positive regulation of growth"/>
    <property type="evidence" value="ECO:0007669"/>
    <property type="project" value="TreeGrafter"/>
</dbReference>
<dbReference type="GO" id="GO:0046427">
    <property type="term" value="P:positive regulation of receptor signaling pathway via JAK-STAT"/>
    <property type="evidence" value="ECO:0007669"/>
    <property type="project" value="TreeGrafter"/>
</dbReference>
<dbReference type="GO" id="GO:0031667">
    <property type="term" value="P:response to nutrient levels"/>
    <property type="evidence" value="ECO:0007669"/>
    <property type="project" value="TreeGrafter"/>
</dbReference>
<dbReference type="FunFam" id="1.20.1250.10:FF:000042">
    <property type="entry name" value="Somatolactin alpha"/>
    <property type="match status" value="1"/>
</dbReference>
<dbReference type="Gene3D" id="1.20.1250.10">
    <property type="match status" value="1"/>
</dbReference>
<dbReference type="InterPro" id="IPR009079">
    <property type="entry name" value="4_helix_cytokine-like_core"/>
</dbReference>
<dbReference type="InterPro" id="IPR001400">
    <property type="entry name" value="Somatotropin/Prolactin"/>
</dbReference>
<dbReference type="InterPro" id="IPR018116">
    <property type="entry name" value="Somatotropin_CS"/>
</dbReference>
<dbReference type="PANTHER" id="PTHR11417:SF3">
    <property type="entry name" value="SOMATOLACTIN ALPHA ISOFORM X1-RELATED"/>
    <property type="match status" value="1"/>
</dbReference>
<dbReference type="PANTHER" id="PTHR11417">
    <property type="entry name" value="SOMATOTROPIN,PROLACTIN"/>
    <property type="match status" value="1"/>
</dbReference>
<dbReference type="Pfam" id="PF00103">
    <property type="entry name" value="Hormone_1"/>
    <property type="match status" value="1"/>
</dbReference>
<dbReference type="PRINTS" id="PR00836">
    <property type="entry name" value="SOMATOTROPIN"/>
</dbReference>
<dbReference type="SUPFAM" id="SSF47266">
    <property type="entry name" value="4-helical cytokines"/>
    <property type="match status" value="1"/>
</dbReference>
<dbReference type="PROSITE" id="PS00266">
    <property type="entry name" value="SOMATOTROPIN_1"/>
    <property type="match status" value="1"/>
</dbReference>
<dbReference type="PROSITE" id="PS00338">
    <property type="entry name" value="SOMATOTROPIN_2"/>
    <property type="match status" value="1"/>
</dbReference>